<protein>
    <recommendedName>
        <fullName>Probable endonuclease lcl3</fullName>
        <ecNumber>3.1.-.-</ecNumber>
    </recommendedName>
</protein>
<comment type="subcellular location">
    <subcellularLocation>
        <location>Mitochondrion</location>
    </subcellularLocation>
    <subcellularLocation>
        <location evidence="1">Membrane</location>
        <topology evidence="1">Single-pass membrane protein</topology>
    </subcellularLocation>
</comment>
<comment type="similarity">
    <text evidence="5">Belongs to the LCL3 family.</text>
</comment>
<keyword id="KW-0106">Calcium</keyword>
<keyword id="KW-0255">Endonuclease</keyword>
<keyword id="KW-0378">Hydrolase</keyword>
<keyword id="KW-0472">Membrane</keyword>
<keyword id="KW-0479">Metal-binding</keyword>
<keyword id="KW-0496">Mitochondrion</keyword>
<keyword id="KW-0540">Nuclease</keyword>
<keyword id="KW-0812">Transmembrane</keyword>
<keyword id="KW-1133">Transmembrane helix</keyword>
<dbReference type="EC" id="3.1.-.-"/>
<dbReference type="EMBL" id="EQ963472">
    <property type="protein sequence ID" value="EED57315.1"/>
    <property type="molecule type" value="Genomic_DNA"/>
</dbReference>
<dbReference type="RefSeq" id="XP_002372927.1">
    <property type="nucleotide sequence ID" value="XM_002372886.1"/>
</dbReference>
<dbReference type="SMR" id="B8MY73"/>
<dbReference type="EnsemblFungi" id="EED57315">
    <property type="protein sequence ID" value="EED57315"/>
    <property type="gene ID" value="AFLA_080100"/>
</dbReference>
<dbReference type="VEuPathDB" id="FungiDB:AFLA_003571"/>
<dbReference type="eggNOG" id="ENOG502RZZQ">
    <property type="taxonomic scope" value="Eukaryota"/>
</dbReference>
<dbReference type="HOGENOM" id="CLU_046484_0_1_1"/>
<dbReference type="OMA" id="IYHTPGG"/>
<dbReference type="GO" id="GO:0016020">
    <property type="term" value="C:membrane"/>
    <property type="evidence" value="ECO:0007669"/>
    <property type="project" value="UniProtKB-SubCell"/>
</dbReference>
<dbReference type="GO" id="GO:0005739">
    <property type="term" value="C:mitochondrion"/>
    <property type="evidence" value="ECO:0007669"/>
    <property type="project" value="UniProtKB-SubCell"/>
</dbReference>
<dbReference type="GO" id="GO:0004519">
    <property type="term" value="F:endonuclease activity"/>
    <property type="evidence" value="ECO:0007669"/>
    <property type="project" value="UniProtKB-KW"/>
</dbReference>
<dbReference type="GO" id="GO:0046872">
    <property type="term" value="F:metal ion binding"/>
    <property type="evidence" value="ECO:0007669"/>
    <property type="project" value="UniProtKB-KW"/>
</dbReference>
<dbReference type="FunFam" id="2.40.50.90:FF:000029">
    <property type="entry name" value="Probable endonuclease lcl3"/>
    <property type="match status" value="1"/>
</dbReference>
<dbReference type="Gene3D" id="2.40.50.90">
    <property type="match status" value="1"/>
</dbReference>
<dbReference type="InterPro" id="IPR035437">
    <property type="entry name" value="SNase_OB-fold_sf"/>
</dbReference>
<dbReference type="InterPro" id="IPR016071">
    <property type="entry name" value="Staphylococal_nuclease_OB-fold"/>
</dbReference>
<dbReference type="PANTHER" id="PTHR12302">
    <property type="entry name" value="EBNA2 BINDING PROTEIN P100"/>
    <property type="match status" value="1"/>
</dbReference>
<dbReference type="PANTHER" id="PTHR12302:SF3">
    <property type="entry name" value="SERINE_THREONINE-PROTEIN KINASE 31"/>
    <property type="match status" value="1"/>
</dbReference>
<dbReference type="Pfam" id="PF00565">
    <property type="entry name" value="SNase"/>
    <property type="match status" value="1"/>
</dbReference>
<dbReference type="SMART" id="SM00318">
    <property type="entry name" value="SNc"/>
    <property type="match status" value="1"/>
</dbReference>
<dbReference type="SUPFAM" id="SSF50199">
    <property type="entry name" value="Staphylococcal nuclease"/>
    <property type="match status" value="1"/>
</dbReference>
<dbReference type="PROSITE" id="PS50830">
    <property type="entry name" value="TNASE_3"/>
    <property type="match status" value="1"/>
</dbReference>
<name>LCL3_ASPFN</name>
<accession>B8MY73</accession>
<reference key="1">
    <citation type="journal article" date="2015" name="Genome Announc.">
        <title>Genome sequence of Aspergillus flavus NRRL 3357, a strain that causes aflatoxin contamination of food and feed.</title>
        <authorList>
            <person name="Nierman W.C."/>
            <person name="Yu J."/>
            <person name="Fedorova-Abrams N.D."/>
            <person name="Losada L."/>
            <person name="Cleveland T.E."/>
            <person name="Bhatnagar D."/>
            <person name="Bennett J.W."/>
            <person name="Dean R."/>
            <person name="Payne G.A."/>
        </authorList>
    </citation>
    <scope>NUCLEOTIDE SEQUENCE [LARGE SCALE GENOMIC DNA]</scope>
    <source>
        <strain>ATCC 200026 / FGSC A1120 / IAM 13836 / NRRL 3357 / JCM 12722 / SRRC 167</strain>
    </source>
</reference>
<feature type="chain" id="PRO_0000408644" description="Probable endonuclease lcl3">
    <location>
        <begin position="1"/>
        <end position="277"/>
    </location>
</feature>
<feature type="transmembrane region" description="Helical" evidence="2">
    <location>
        <begin position="42"/>
        <end position="58"/>
    </location>
</feature>
<feature type="domain" description="TNase-like" evidence="3">
    <location>
        <begin position="80"/>
        <end position="248"/>
    </location>
</feature>
<feature type="region of interest" description="Disordered" evidence="4">
    <location>
        <begin position="1"/>
        <end position="22"/>
    </location>
</feature>
<feature type="region of interest" description="Disordered" evidence="4">
    <location>
        <begin position="257"/>
        <end position="277"/>
    </location>
</feature>
<feature type="compositionally biased region" description="Basic and acidic residues" evidence="4">
    <location>
        <begin position="11"/>
        <end position="22"/>
    </location>
</feature>
<feature type="compositionally biased region" description="Basic and acidic residues" evidence="4">
    <location>
        <begin position="257"/>
        <end position="268"/>
    </location>
</feature>
<feature type="active site" evidence="3">
    <location>
        <position position="131"/>
    </location>
</feature>
<feature type="active site" evidence="3">
    <location>
        <position position="139"/>
    </location>
</feature>
<feature type="active site" evidence="3">
    <location>
        <position position="179"/>
    </location>
</feature>
<feature type="binding site" evidence="3">
    <location>
        <position position="136"/>
    </location>
    <ligand>
        <name>Ca(2+)</name>
        <dbReference type="ChEBI" id="CHEBI:29108"/>
    </ligand>
</feature>
<gene>
    <name type="primary">lcl3</name>
    <name type="ORF">AFLA_080100</name>
</gene>
<sequence>MRWPPWASESQARDKQDEQNQKNWDKSLNAIDWAAFTEPRTLIPTLILTTGIIGALQIHRRYLRRFPDAVSISPSYFRKRTILGQVTSVGDGDGFRLYHTPGGRLAGWGWLPWKRVPTAKKDLRDKTISVRLAGVDAPELAHFGRPEQPYAREAHEWLTSYVLNRRVRVLVHRQDQYQRVVASAYVRRAIDFPIPFRRRDVSYEMLTRGLATVYEAKAGSEFGGPELERKYREAESIAKRKGTGLWKGYRRNRKGWESPREYKTRMGLEEQSQGKGN</sequence>
<evidence type="ECO:0000250" key="1"/>
<evidence type="ECO:0000255" key="2"/>
<evidence type="ECO:0000255" key="3">
    <source>
        <dbReference type="PROSITE-ProRule" id="PRU00272"/>
    </source>
</evidence>
<evidence type="ECO:0000256" key="4">
    <source>
        <dbReference type="SAM" id="MobiDB-lite"/>
    </source>
</evidence>
<evidence type="ECO:0000305" key="5"/>
<proteinExistence type="inferred from homology"/>
<organism>
    <name type="scientific">Aspergillus flavus (strain ATCC 200026 / FGSC A1120 / IAM 13836 / NRRL 3357 / JCM 12722 / SRRC 167)</name>
    <dbReference type="NCBI Taxonomy" id="332952"/>
    <lineage>
        <taxon>Eukaryota</taxon>
        <taxon>Fungi</taxon>
        <taxon>Dikarya</taxon>
        <taxon>Ascomycota</taxon>
        <taxon>Pezizomycotina</taxon>
        <taxon>Eurotiomycetes</taxon>
        <taxon>Eurotiomycetidae</taxon>
        <taxon>Eurotiales</taxon>
        <taxon>Aspergillaceae</taxon>
        <taxon>Aspergillus</taxon>
        <taxon>Aspergillus subgen. Circumdati</taxon>
    </lineage>
</organism>